<proteinExistence type="evidence at protein level"/>
<accession>Q8RPQ2</accession>
<accession>Q6HR83</accession>
<accession>Q6KKJ8</accession>
<accession>Q81XE7</accession>
<evidence type="ECO:0000250" key="1"/>
<evidence type="ECO:0000269" key="2">
    <source>
    </source>
</evidence>
<evidence type="ECO:0000305" key="3"/>
<evidence type="ECO:0000305" key="4">
    <source>
    </source>
</evidence>
<evidence type="ECO:0007829" key="5">
    <source>
        <dbReference type="PDB" id="1JI5"/>
    </source>
</evidence>
<gene>
    <name type="primary">dps2</name>
    <name type="synonym">dlp1</name>
    <name type="ordered locus">BA_5290</name>
    <name type="ordered locus">GBAA_5290</name>
    <name type="ordered locus">BAS4914</name>
</gene>
<name>DPS2_BACAN</name>
<comment type="function">
    <text evidence="1">Protects DNA from oxidative damage by sequestering intracellular Fe(2+) ion and storing it in the form of Fe(3+) oxyhydroxide mineral. One hydrogen peroxide oxidizes two Fe(2+) ions, which prevents hydroxyl radical production by the Fenton reaction (By similarity). It is capable of binding and sequestering Fe(2+) ion. Does not bind DNA.</text>
</comment>
<comment type="catalytic activity">
    <reaction>
        <text>2 Fe(2+) + H2O2 + 2 H(+) = 2 Fe(3+) + 2 H2O</text>
        <dbReference type="Rhea" id="RHEA:48712"/>
        <dbReference type="ChEBI" id="CHEBI:15377"/>
        <dbReference type="ChEBI" id="CHEBI:15378"/>
        <dbReference type="ChEBI" id="CHEBI:16240"/>
        <dbReference type="ChEBI" id="CHEBI:29033"/>
        <dbReference type="ChEBI" id="CHEBI:29034"/>
    </reaction>
</comment>
<comment type="subunit">
    <text evidence="1 2">The 12 subunits form a hollow sphere into which the mineral iron core of up to 500 Fe(3+) can be deposited (By similarity). Homododecamer.</text>
</comment>
<comment type="subcellular location">
    <subcellularLocation>
        <location evidence="1">Cytoplasm</location>
    </subcellularLocation>
</comment>
<comment type="domain">
    <text>12 di-nuclear ferroxidase centers are located at the interfaces between subunits related by 2-fold symmetry axes.</text>
</comment>
<comment type="similarity">
    <text evidence="3">Belongs to the Dps family.</text>
</comment>
<organism>
    <name type="scientific">Bacillus anthracis</name>
    <dbReference type="NCBI Taxonomy" id="1392"/>
    <lineage>
        <taxon>Bacteria</taxon>
        <taxon>Bacillati</taxon>
        <taxon>Bacillota</taxon>
        <taxon>Bacilli</taxon>
        <taxon>Bacillales</taxon>
        <taxon>Bacillaceae</taxon>
        <taxon>Bacillus</taxon>
        <taxon>Bacillus cereus group</taxon>
    </lineage>
</organism>
<sequence>MNKQVIEVLNKQVADWSVLFTKLHNFHWYVKGPQFFTLHEKFEELYTESATHIDEIAERILAIGGKPVATMKEYLEISSIQEAAYGETAEGMVEAIMKDYEMMLVELKKGMEIAQNSDDEMTSDLLLGIYTELEKHAWMLRAFLNQ</sequence>
<dbReference type="EC" id="1.16.-.-"/>
<dbReference type="EMBL" id="AF374268">
    <property type="protein sequence ID" value="AAM18635.1"/>
    <property type="molecule type" value="Genomic_DNA"/>
</dbReference>
<dbReference type="EMBL" id="AE016879">
    <property type="protein sequence ID" value="AAP28955.1"/>
    <property type="molecule type" value="Genomic_DNA"/>
</dbReference>
<dbReference type="EMBL" id="AE017334">
    <property type="protein sequence ID" value="AAT34421.1"/>
    <property type="molecule type" value="Genomic_DNA"/>
</dbReference>
<dbReference type="EMBL" id="AE017225">
    <property type="protein sequence ID" value="AAT57205.1"/>
    <property type="molecule type" value="Genomic_DNA"/>
</dbReference>
<dbReference type="RefSeq" id="NP_847469.1">
    <property type="nucleotide sequence ID" value="NC_003997.3"/>
</dbReference>
<dbReference type="RefSeq" id="WP_001041890.1">
    <property type="nucleotide sequence ID" value="NZ_WXXJ01000014.1"/>
</dbReference>
<dbReference type="RefSeq" id="YP_031155.1">
    <property type="nucleotide sequence ID" value="NC_005945.1"/>
</dbReference>
<dbReference type="PDB" id="1JI5">
    <property type="method" value="X-ray"/>
    <property type="resolution" value="2.50 A"/>
    <property type="chains" value="A/B/C/D=4-145"/>
</dbReference>
<dbReference type="PDBsum" id="1JI5"/>
<dbReference type="SMR" id="Q8RPQ2"/>
<dbReference type="STRING" id="261594.GBAA_5290"/>
<dbReference type="DNASU" id="1084783"/>
<dbReference type="KEGG" id="ban:BA_5290"/>
<dbReference type="KEGG" id="bar:GBAA_5290"/>
<dbReference type="KEGG" id="bat:BAS4914"/>
<dbReference type="PATRIC" id="fig|198094.11.peg.5251"/>
<dbReference type="eggNOG" id="COG0783">
    <property type="taxonomic scope" value="Bacteria"/>
</dbReference>
<dbReference type="HOGENOM" id="CLU_098183_2_2_9"/>
<dbReference type="OMA" id="YLQTHNF"/>
<dbReference type="OrthoDB" id="9797023at2"/>
<dbReference type="EvolutionaryTrace" id="Q8RPQ2"/>
<dbReference type="Proteomes" id="UP000000427">
    <property type="component" value="Chromosome"/>
</dbReference>
<dbReference type="Proteomes" id="UP000000594">
    <property type="component" value="Chromosome"/>
</dbReference>
<dbReference type="GO" id="GO:0005737">
    <property type="term" value="C:cytoplasm"/>
    <property type="evidence" value="ECO:0007669"/>
    <property type="project" value="UniProtKB-SubCell"/>
</dbReference>
<dbReference type="GO" id="GO:0008199">
    <property type="term" value="F:ferric iron binding"/>
    <property type="evidence" value="ECO:0007669"/>
    <property type="project" value="InterPro"/>
</dbReference>
<dbReference type="GO" id="GO:0016722">
    <property type="term" value="F:oxidoreductase activity, acting on metal ions"/>
    <property type="evidence" value="ECO:0007669"/>
    <property type="project" value="InterPro"/>
</dbReference>
<dbReference type="GO" id="GO:0006879">
    <property type="term" value="P:intracellular iron ion homeostasis"/>
    <property type="evidence" value="ECO:0007669"/>
    <property type="project" value="UniProtKB-KW"/>
</dbReference>
<dbReference type="CDD" id="cd01043">
    <property type="entry name" value="DPS"/>
    <property type="match status" value="1"/>
</dbReference>
<dbReference type="FunFam" id="1.20.1260.10:FF:000007">
    <property type="entry name" value="DNA protection during starvation protein 2"/>
    <property type="match status" value="1"/>
</dbReference>
<dbReference type="Gene3D" id="1.20.1260.10">
    <property type="match status" value="1"/>
</dbReference>
<dbReference type="InterPro" id="IPR002177">
    <property type="entry name" value="DPS_DNA-bd"/>
</dbReference>
<dbReference type="InterPro" id="IPR023188">
    <property type="entry name" value="DPS_DNA-bd_CS"/>
</dbReference>
<dbReference type="InterPro" id="IPR012347">
    <property type="entry name" value="Ferritin-like"/>
</dbReference>
<dbReference type="InterPro" id="IPR009078">
    <property type="entry name" value="Ferritin-like_SF"/>
</dbReference>
<dbReference type="InterPro" id="IPR008331">
    <property type="entry name" value="Ferritin_DPS_dom"/>
</dbReference>
<dbReference type="PANTHER" id="PTHR42932">
    <property type="entry name" value="GENERAL STRESS PROTEIN 20U"/>
    <property type="match status" value="1"/>
</dbReference>
<dbReference type="PANTHER" id="PTHR42932:SF1">
    <property type="entry name" value="GENERAL STRESS PROTEIN 20U"/>
    <property type="match status" value="1"/>
</dbReference>
<dbReference type="Pfam" id="PF00210">
    <property type="entry name" value="Ferritin"/>
    <property type="match status" value="1"/>
</dbReference>
<dbReference type="PIRSF" id="PIRSF005900">
    <property type="entry name" value="Dps"/>
    <property type="match status" value="1"/>
</dbReference>
<dbReference type="PRINTS" id="PR01346">
    <property type="entry name" value="HELNAPAPROT"/>
</dbReference>
<dbReference type="SUPFAM" id="SSF47240">
    <property type="entry name" value="Ferritin-like"/>
    <property type="match status" value="1"/>
</dbReference>
<dbReference type="PROSITE" id="PS00818">
    <property type="entry name" value="DPS_1"/>
    <property type="match status" value="1"/>
</dbReference>
<dbReference type="PROSITE" id="PS00819">
    <property type="entry name" value="DPS_2"/>
    <property type="match status" value="1"/>
</dbReference>
<feature type="chain" id="PRO_0000253327" description="DNA protection during starvation protein 2">
    <location>
        <begin position="1"/>
        <end position="146"/>
    </location>
</feature>
<feature type="binding site" evidence="2">
    <location>
        <position position="27"/>
    </location>
    <ligand>
        <name>Fe cation</name>
        <dbReference type="ChEBI" id="CHEBI:24875"/>
        <label>1</label>
        <note>ligand shared between two dodecameric partners</note>
    </ligand>
</feature>
<feature type="binding site" description="in other chain" evidence="2">
    <location>
        <position position="54"/>
    </location>
    <ligand>
        <name>Fe cation</name>
        <dbReference type="ChEBI" id="CHEBI:24875"/>
        <label>1</label>
        <note>ligand shared between two dodecameric partners</note>
    </ligand>
</feature>
<feature type="binding site" description="in other chain" evidence="2">
    <location>
        <position position="58"/>
    </location>
    <ligand>
        <name>Fe cation</name>
        <dbReference type="ChEBI" id="CHEBI:24875"/>
        <label>1</label>
        <note>ligand shared between two dodecameric partners</note>
    </ligand>
</feature>
<feature type="binding site" evidence="4">
    <location>
        <position position="58"/>
    </location>
    <ligand>
        <name>Fe cation</name>
        <dbReference type="ChEBI" id="CHEBI:24875"/>
        <label>2</label>
    </ligand>
</feature>
<feature type="helix" evidence="5">
    <location>
        <begin position="5"/>
        <end position="29"/>
    </location>
</feature>
<feature type="helix" evidence="5">
    <location>
        <begin position="35"/>
        <end position="62"/>
    </location>
</feature>
<feature type="helix" evidence="5">
    <location>
        <begin position="71"/>
        <end position="77"/>
    </location>
</feature>
<feature type="helix" evidence="5">
    <location>
        <begin position="89"/>
        <end position="116"/>
    </location>
</feature>
<feature type="helix" evidence="5">
    <location>
        <begin position="120"/>
        <end position="144"/>
    </location>
</feature>
<reference key="1">
    <citation type="journal article" date="2002" name="J. Biol. Chem.">
        <title>Structure of two iron-binding proteins from Bacillus anthracis.</title>
        <authorList>
            <person name="Papinutto E."/>
            <person name="Dundon W.G."/>
            <person name="Pitulis N."/>
            <person name="Battistutta R."/>
            <person name="Montecucco C."/>
            <person name="Zanotti G."/>
        </authorList>
    </citation>
    <scope>NUCLEOTIDE SEQUENCE [GENOMIC DNA]</scope>
    <scope>X-RAY CRYSTALLOGRAPHY (2.5 ANGSTROMS) OF 4-145 IN COMPLEX WITH IRON</scope>
    <scope>SUBUNIT</scope>
    <source>
        <strain>9131</strain>
    </source>
</reference>
<reference key="2">
    <citation type="journal article" date="2003" name="Nature">
        <title>The genome sequence of Bacillus anthracis Ames and comparison to closely related bacteria.</title>
        <authorList>
            <person name="Read T.D."/>
            <person name="Peterson S.N."/>
            <person name="Tourasse N.J."/>
            <person name="Baillie L.W."/>
            <person name="Paulsen I.T."/>
            <person name="Nelson K.E."/>
            <person name="Tettelin H."/>
            <person name="Fouts D.E."/>
            <person name="Eisen J.A."/>
            <person name="Gill S.R."/>
            <person name="Holtzapple E.K."/>
            <person name="Okstad O.A."/>
            <person name="Helgason E."/>
            <person name="Rilstone J."/>
            <person name="Wu M."/>
            <person name="Kolonay J.F."/>
            <person name="Beanan M.J."/>
            <person name="Dodson R.J."/>
            <person name="Brinkac L.M."/>
            <person name="Gwinn M.L."/>
            <person name="DeBoy R.T."/>
            <person name="Madpu R."/>
            <person name="Daugherty S.C."/>
            <person name="Durkin A.S."/>
            <person name="Haft D.H."/>
            <person name="Nelson W.C."/>
            <person name="Peterson J.D."/>
            <person name="Pop M."/>
            <person name="Khouri H.M."/>
            <person name="Radune D."/>
            <person name="Benton J.L."/>
            <person name="Mahamoud Y."/>
            <person name="Jiang L."/>
            <person name="Hance I.R."/>
            <person name="Weidman J.F."/>
            <person name="Berry K.J."/>
            <person name="Plaut R.D."/>
            <person name="Wolf A.M."/>
            <person name="Watkins K.L."/>
            <person name="Nierman W.C."/>
            <person name="Hazen A."/>
            <person name="Cline R.T."/>
            <person name="Redmond C."/>
            <person name="Thwaite J.E."/>
            <person name="White O."/>
            <person name="Salzberg S.L."/>
            <person name="Thomason B."/>
            <person name="Friedlander A.M."/>
            <person name="Koehler T.M."/>
            <person name="Hanna P.C."/>
            <person name="Kolstoe A.-B."/>
            <person name="Fraser C.M."/>
        </authorList>
    </citation>
    <scope>NUCLEOTIDE SEQUENCE [LARGE SCALE GENOMIC DNA]</scope>
    <source>
        <strain>Ames / isolate Porton</strain>
    </source>
</reference>
<reference key="3">
    <citation type="journal article" date="2009" name="J. Bacteriol.">
        <title>The complete genome sequence of Bacillus anthracis Ames 'Ancestor'.</title>
        <authorList>
            <person name="Ravel J."/>
            <person name="Jiang L."/>
            <person name="Stanley S.T."/>
            <person name="Wilson M.R."/>
            <person name="Decker R.S."/>
            <person name="Read T.D."/>
            <person name="Worsham P."/>
            <person name="Keim P.S."/>
            <person name="Salzberg S.L."/>
            <person name="Fraser-Liggett C.M."/>
            <person name="Rasko D.A."/>
        </authorList>
    </citation>
    <scope>NUCLEOTIDE SEQUENCE [LARGE SCALE GENOMIC DNA]</scope>
    <source>
        <strain>Ames ancestor</strain>
    </source>
</reference>
<reference key="4">
    <citation type="submission" date="2004-01" db="EMBL/GenBank/DDBJ databases">
        <title>Complete genome sequence of Bacillus anthracis Sterne.</title>
        <authorList>
            <person name="Brettin T.S."/>
            <person name="Bruce D."/>
            <person name="Challacombe J.F."/>
            <person name="Gilna P."/>
            <person name="Han C."/>
            <person name="Hill K."/>
            <person name="Hitchcock P."/>
            <person name="Jackson P."/>
            <person name="Keim P."/>
            <person name="Longmire J."/>
            <person name="Lucas S."/>
            <person name="Okinaka R."/>
            <person name="Richardson P."/>
            <person name="Rubin E."/>
            <person name="Tice H."/>
        </authorList>
    </citation>
    <scope>NUCLEOTIDE SEQUENCE [LARGE SCALE GENOMIC DNA]</scope>
    <source>
        <strain>Sterne</strain>
    </source>
</reference>
<keyword id="KW-0002">3D-structure</keyword>
<keyword id="KW-0963">Cytoplasm</keyword>
<keyword id="KW-0408">Iron</keyword>
<keyword id="KW-0409">Iron storage</keyword>
<keyword id="KW-0479">Metal-binding</keyword>
<keyword id="KW-0560">Oxidoreductase</keyword>
<keyword id="KW-1185">Reference proteome</keyword>
<protein>
    <recommendedName>
        <fullName>DNA protection during starvation protein 2</fullName>
        <ecNumber>1.16.-.-</ecNumber>
    </recommendedName>
</protein>